<feature type="signal peptide" evidence="1">
    <location>
        <begin position="1"/>
        <end position="18"/>
    </location>
</feature>
<feature type="chain" id="PRO_0000024680" description="Procollagen-lysine,2-oxoglutarate 5-dioxygenase 1">
    <location>
        <begin position="19"/>
        <end position="727"/>
    </location>
</feature>
<feature type="domain" description="Fe2OG dioxygenase" evidence="5">
    <location>
        <begin position="636"/>
        <end position="727"/>
    </location>
</feature>
<feature type="active site" evidence="4">
    <location>
        <position position="718"/>
    </location>
</feature>
<feature type="binding site" evidence="5">
    <location>
        <position position="656"/>
    </location>
    <ligand>
        <name>Fe cation</name>
        <dbReference type="ChEBI" id="CHEBI:24875"/>
    </ligand>
</feature>
<feature type="binding site" evidence="5">
    <location>
        <position position="658"/>
    </location>
    <ligand>
        <name>Fe cation</name>
        <dbReference type="ChEBI" id="CHEBI:24875"/>
    </ligand>
</feature>
<feature type="binding site" evidence="5">
    <location>
        <position position="708"/>
    </location>
    <ligand>
        <name>Fe cation</name>
        <dbReference type="ChEBI" id="CHEBI:24875"/>
    </ligand>
</feature>
<feature type="glycosylation site" description="N-linked (GlcNAc...) asparagine" evidence="4">
    <location>
        <position position="163"/>
    </location>
</feature>
<feature type="glycosylation site" description="N-linked (GlcNAc...) asparagine" evidence="4">
    <location>
        <position position="197"/>
    </location>
</feature>
<feature type="glycosylation site" description="N-linked (GlcNAc...) asparagine" evidence="4">
    <location>
        <position position="538"/>
    </location>
</feature>
<feature type="glycosylation site" description="N-linked (GlcNAc...) asparagine" evidence="4">
    <location>
        <position position="686"/>
    </location>
</feature>
<gene>
    <name type="primary">PLOD1</name>
</gene>
<protein>
    <recommendedName>
        <fullName>Procollagen-lysine,2-oxoglutarate 5-dioxygenase 1</fullName>
        <ecNumber evidence="2">1.14.11.4</ecNumber>
    </recommendedName>
    <alternativeName>
        <fullName>Lysyl hydroxylase 1</fullName>
        <shortName>LH1</shortName>
    </alternativeName>
</protein>
<comment type="function">
    <text evidence="2 3">Part of a complex composed of PLOD1, P3H3 and P3H4 that catalyzes hydroxylation of lysine residues in collagen alpha chains and is required for normal assembly and cross-linkling of collagen fibrils (By similarity). Forms hydroxylysine residues in -Xaa-Lys-Gly- sequences in collagens (By similarity). These hydroxylysines serve as sites of attachment for carbohydrate units and are essential for the stability of the intermolecular collagen cross-links (By similarity).</text>
</comment>
<comment type="catalytic activity">
    <reaction evidence="2">
        <text>L-lysyl-[collagen] + 2-oxoglutarate + O2 = (5R)-5-hydroxy-L-lysyl-[collagen] + succinate + CO2</text>
        <dbReference type="Rhea" id="RHEA:16569"/>
        <dbReference type="Rhea" id="RHEA-COMP:12751"/>
        <dbReference type="Rhea" id="RHEA-COMP:12752"/>
        <dbReference type="ChEBI" id="CHEBI:15379"/>
        <dbReference type="ChEBI" id="CHEBI:16526"/>
        <dbReference type="ChEBI" id="CHEBI:16810"/>
        <dbReference type="ChEBI" id="CHEBI:29969"/>
        <dbReference type="ChEBI" id="CHEBI:30031"/>
        <dbReference type="ChEBI" id="CHEBI:133442"/>
        <dbReference type="EC" id="1.14.11.4"/>
    </reaction>
</comment>
<comment type="cofactor">
    <cofactor evidence="2">
        <name>Fe(2+)</name>
        <dbReference type="ChEBI" id="CHEBI:29033"/>
    </cofactor>
</comment>
<comment type="cofactor">
    <cofactor evidence="2">
        <name>L-ascorbate</name>
        <dbReference type="ChEBI" id="CHEBI:38290"/>
    </cofactor>
</comment>
<comment type="subunit">
    <text evidence="2 3">Homodimer (By similarity). Identified in a complex with P3H3 and P3H4 (By similarity).</text>
</comment>
<comment type="subcellular location">
    <subcellularLocation>
        <location evidence="1">Rough endoplasmic reticulum membrane</location>
        <topology evidence="1">Peripheral membrane protein</topology>
        <orientation evidence="1">Lumenal side</orientation>
    </subcellularLocation>
</comment>
<accession>Q5R9N3</accession>
<sequence length="727" mass="83563">MRPLLLLAPLGWLLLAEAKGDAKPEDNLLVLTVATKETEGFRRFKRSAQFFNYKIQALGLGEDWNVEKGTSAGGGQKVRLLKKALEKHADKEDLVILFTDSYDVLFASGPRELLKKFRQARSQVVFSAEELIYPDRRLETKYPVVSDGKRFLGSGGFIGYAPNLSKLVAEWEGQDSDSDQLFYTRIFLDPEKREQINITLDHRCRIFQNLDGALDEVVLKFEMGHVRARNLAYDTLPVLIHGNGPTKLQLNYLGNYIPRFWTFETGCTVCDEGLRSLKGIGDEALPTVLVGVFIEQPTPFVSLFFQRLLRLHYPQKHMRLFIHNHEQHHKAQVEEFLAEHGSEYQSVKLVGPEVRMANADARNMGADLCRQDRSCTYYFSVDADVALTEPSSLRLLIQQNKNVIAPLMTRHGRLWSNFWGALSADGYYARSEDYVDIVQGRRVGVWNVPYISNIYLIKGSALRGELQSPDLFHHSKLDPDMAFCANVRQQDVFMFLTNRHTLGHLLSLDSYRTTHLHNDLWEVFSNPEDWKEKYIHQNYTKALAGKLVETPCPDVYWFPIFTEVACDELVEEMEHFGQWSLGDNKDNRIQGGYENVPTIDIHMNQIGFEREWHKFLLEYIAPMTEKLYPGYYTRAQFDLAFVVRYKPDEQPSLMPHHDASTFTINIALNRVGVDYEGGGCRFLRYNCSIRAPRKGWTLMHPGRLTHYHEGLPTTRGTRYIAVSFVDP</sequence>
<proteinExistence type="evidence at transcript level"/>
<dbReference type="EC" id="1.14.11.4" evidence="2"/>
<dbReference type="EMBL" id="CR859353">
    <property type="protein sequence ID" value="CAH91527.1"/>
    <property type="molecule type" value="mRNA"/>
</dbReference>
<dbReference type="RefSeq" id="NP_001127428.1">
    <property type="nucleotide sequence ID" value="NM_001133956.1"/>
</dbReference>
<dbReference type="SMR" id="Q5R9N3"/>
<dbReference type="FunCoup" id="Q5R9N3">
    <property type="interactions" value="1206"/>
</dbReference>
<dbReference type="STRING" id="9601.ENSPPYP00000002169"/>
<dbReference type="GlyCosmos" id="Q5R9N3">
    <property type="glycosylation" value="4 sites, No reported glycans"/>
</dbReference>
<dbReference type="GeneID" id="100174498"/>
<dbReference type="KEGG" id="pon:100174498"/>
<dbReference type="CTD" id="5351"/>
<dbReference type="eggNOG" id="KOG1971">
    <property type="taxonomic scope" value="Eukaryota"/>
</dbReference>
<dbReference type="InParanoid" id="Q5R9N3"/>
<dbReference type="OrthoDB" id="69177at2759"/>
<dbReference type="Proteomes" id="UP000001595">
    <property type="component" value="Unplaced"/>
</dbReference>
<dbReference type="GO" id="GO:0030867">
    <property type="term" value="C:rough endoplasmic reticulum membrane"/>
    <property type="evidence" value="ECO:0007669"/>
    <property type="project" value="UniProtKB-SubCell"/>
</dbReference>
<dbReference type="GO" id="GO:0005506">
    <property type="term" value="F:iron ion binding"/>
    <property type="evidence" value="ECO:0007669"/>
    <property type="project" value="InterPro"/>
</dbReference>
<dbReference type="GO" id="GO:0031418">
    <property type="term" value="F:L-ascorbic acid binding"/>
    <property type="evidence" value="ECO:0007669"/>
    <property type="project" value="UniProtKB-KW"/>
</dbReference>
<dbReference type="GO" id="GO:0008475">
    <property type="term" value="F:procollagen-lysine 5-dioxygenase activity"/>
    <property type="evidence" value="ECO:0000250"/>
    <property type="project" value="UniProtKB"/>
</dbReference>
<dbReference type="GO" id="GO:0017185">
    <property type="term" value="P:peptidyl-lysine hydroxylation"/>
    <property type="evidence" value="ECO:0000250"/>
    <property type="project" value="UniProtKB"/>
</dbReference>
<dbReference type="CDD" id="cd23004">
    <property type="entry name" value="GT_LH1"/>
    <property type="match status" value="1"/>
</dbReference>
<dbReference type="FunFam" id="2.60.120.620:FF:000004">
    <property type="entry name" value="Procollagen-lysine,2-oxoglutarate 5-dioxygenase 2"/>
    <property type="match status" value="1"/>
</dbReference>
<dbReference type="Gene3D" id="2.60.120.620">
    <property type="entry name" value="q2cbj1_9rhob like domain"/>
    <property type="match status" value="1"/>
</dbReference>
<dbReference type="InterPro" id="IPR050757">
    <property type="entry name" value="Collagen_mod_GT25"/>
</dbReference>
<dbReference type="InterPro" id="IPR044861">
    <property type="entry name" value="IPNS-like_FE2OG_OXY"/>
</dbReference>
<dbReference type="InterPro" id="IPR029044">
    <property type="entry name" value="Nucleotide-diphossugar_trans"/>
</dbReference>
<dbReference type="InterPro" id="IPR005123">
    <property type="entry name" value="Oxoglu/Fe-dep_dioxygenase_dom"/>
</dbReference>
<dbReference type="InterPro" id="IPR006620">
    <property type="entry name" value="Pro_4_hyd_alph"/>
</dbReference>
<dbReference type="InterPro" id="IPR001006">
    <property type="entry name" value="Procol_lys_dOase"/>
</dbReference>
<dbReference type="PANTHER" id="PTHR10730:SF5">
    <property type="entry name" value="PROCOLLAGEN-LYSINE,2-OXOGLUTARATE 5-DIOXYGENASE 1"/>
    <property type="match status" value="1"/>
</dbReference>
<dbReference type="PANTHER" id="PTHR10730">
    <property type="entry name" value="PROCOLLAGEN-LYSINE,2-OXOGLUTARATE 5-DIOXYGENASE/GLYCOSYLTRANSFERASE 25 FAMILY MEMBER"/>
    <property type="match status" value="1"/>
</dbReference>
<dbReference type="Pfam" id="PF03171">
    <property type="entry name" value="2OG-FeII_Oxy"/>
    <property type="match status" value="1"/>
</dbReference>
<dbReference type="Pfam" id="PF25342">
    <property type="entry name" value="GT_PLOD"/>
    <property type="match status" value="1"/>
</dbReference>
<dbReference type="Pfam" id="PF25238">
    <property type="entry name" value="OGFOD2-like"/>
    <property type="match status" value="1"/>
</dbReference>
<dbReference type="SMART" id="SM00702">
    <property type="entry name" value="P4Hc"/>
    <property type="match status" value="1"/>
</dbReference>
<dbReference type="SUPFAM" id="SSF53448">
    <property type="entry name" value="Nucleotide-diphospho-sugar transferases"/>
    <property type="match status" value="1"/>
</dbReference>
<dbReference type="PROSITE" id="PS51471">
    <property type="entry name" value="FE2OG_OXY"/>
    <property type="match status" value="1"/>
</dbReference>
<dbReference type="PROSITE" id="PS01325">
    <property type="entry name" value="LYS_HYDROXYLASE"/>
    <property type="match status" value="1"/>
</dbReference>
<evidence type="ECO:0000250" key="1"/>
<evidence type="ECO:0000250" key="2">
    <source>
        <dbReference type="UniProtKB" id="P24802"/>
    </source>
</evidence>
<evidence type="ECO:0000250" key="3">
    <source>
        <dbReference type="UniProtKB" id="Q9R0E2"/>
    </source>
</evidence>
<evidence type="ECO:0000255" key="4"/>
<evidence type="ECO:0000255" key="5">
    <source>
        <dbReference type="PROSITE-ProRule" id="PRU00805"/>
    </source>
</evidence>
<keyword id="KW-0223">Dioxygenase</keyword>
<keyword id="KW-0256">Endoplasmic reticulum</keyword>
<keyword id="KW-0325">Glycoprotein</keyword>
<keyword id="KW-0408">Iron</keyword>
<keyword id="KW-0472">Membrane</keyword>
<keyword id="KW-0479">Metal-binding</keyword>
<keyword id="KW-0560">Oxidoreductase</keyword>
<keyword id="KW-1185">Reference proteome</keyword>
<keyword id="KW-0732">Signal</keyword>
<keyword id="KW-0847">Vitamin C</keyword>
<reference key="1">
    <citation type="submission" date="2004-11" db="EMBL/GenBank/DDBJ databases">
        <authorList>
            <consortium name="The German cDNA consortium"/>
        </authorList>
    </citation>
    <scope>NUCLEOTIDE SEQUENCE [LARGE SCALE MRNA]</scope>
    <source>
        <tissue>Kidney</tissue>
    </source>
</reference>
<organism>
    <name type="scientific">Pongo abelii</name>
    <name type="common">Sumatran orangutan</name>
    <name type="synonym">Pongo pygmaeus abelii</name>
    <dbReference type="NCBI Taxonomy" id="9601"/>
    <lineage>
        <taxon>Eukaryota</taxon>
        <taxon>Metazoa</taxon>
        <taxon>Chordata</taxon>
        <taxon>Craniata</taxon>
        <taxon>Vertebrata</taxon>
        <taxon>Euteleostomi</taxon>
        <taxon>Mammalia</taxon>
        <taxon>Eutheria</taxon>
        <taxon>Euarchontoglires</taxon>
        <taxon>Primates</taxon>
        <taxon>Haplorrhini</taxon>
        <taxon>Catarrhini</taxon>
        <taxon>Hominidae</taxon>
        <taxon>Pongo</taxon>
    </lineage>
</organism>
<name>PLOD1_PONAB</name>